<name>RL30_ACIB5</name>
<comment type="subunit">
    <text evidence="1">Part of the 50S ribosomal subunit.</text>
</comment>
<comment type="similarity">
    <text evidence="1">Belongs to the universal ribosomal protein uL30 family.</text>
</comment>
<accession>B7IA21</accession>
<reference key="1">
    <citation type="journal article" date="2008" name="J. Bacteriol.">
        <title>Comparative genome sequence analysis of multidrug-resistant Acinetobacter baumannii.</title>
        <authorList>
            <person name="Adams M.D."/>
            <person name="Goglin K."/>
            <person name="Molyneaux N."/>
            <person name="Hujer K.M."/>
            <person name="Lavender H."/>
            <person name="Jamison J.J."/>
            <person name="MacDonald I.J."/>
            <person name="Martin K.M."/>
            <person name="Russo T."/>
            <person name="Campagnari A.A."/>
            <person name="Hujer A.M."/>
            <person name="Bonomo R.A."/>
            <person name="Gill S.R."/>
        </authorList>
    </citation>
    <scope>NUCLEOTIDE SEQUENCE [LARGE SCALE GENOMIC DNA]</scope>
    <source>
        <strain>AB0057</strain>
    </source>
</reference>
<protein>
    <recommendedName>
        <fullName evidence="1">Large ribosomal subunit protein uL30</fullName>
    </recommendedName>
    <alternativeName>
        <fullName evidence="2">50S ribosomal protein L30</fullName>
    </alternativeName>
</protein>
<proteinExistence type="evidence at protein level"/>
<keyword id="KW-0002">3D-structure</keyword>
<keyword id="KW-0687">Ribonucleoprotein</keyword>
<keyword id="KW-0689">Ribosomal protein</keyword>
<organism>
    <name type="scientific">Acinetobacter baumannii (strain AB0057)</name>
    <dbReference type="NCBI Taxonomy" id="480119"/>
    <lineage>
        <taxon>Bacteria</taxon>
        <taxon>Pseudomonadati</taxon>
        <taxon>Pseudomonadota</taxon>
        <taxon>Gammaproteobacteria</taxon>
        <taxon>Moraxellales</taxon>
        <taxon>Moraxellaceae</taxon>
        <taxon>Acinetobacter</taxon>
        <taxon>Acinetobacter calcoaceticus/baumannii complex</taxon>
    </lineage>
</organism>
<dbReference type="EMBL" id="CP001182">
    <property type="protein sequence ID" value="ACJ42879.1"/>
    <property type="molecule type" value="Genomic_DNA"/>
</dbReference>
<dbReference type="RefSeq" id="WP_000849088.1">
    <property type="nucleotide sequence ID" value="NC_011586.2"/>
</dbReference>
<dbReference type="PDB" id="7M4V">
    <property type="method" value="EM"/>
    <property type="resolution" value="2.54 A"/>
    <property type="chains" value="Y=1-58"/>
</dbReference>
<dbReference type="PDB" id="7UVV">
    <property type="method" value="EM"/>
    <property type="resolution" value="2.50 A"/>
    <property type="chains" value="Y=1-58"/>
</dbReference>
<dbReference type="PDB" id="7UVW">
    <property type="method" value="EM"/>
    <property type="resolution" value="2.37 A"/>
    <property type="chains" value="Y=1-58"/>
</dbReference>
<dbReference type="PDB" id="7UVX">
    <property type="method" value="EM"/>
    <property type="resolution" value="2.35 A"/>
    <property type="chains" value="Y=1-58"/>
</dbReference>
<dbReference type="PDB" id="7UVY">
    <property type="method" value="EM"/>
    <property type="resolution" value="2.39 A"/>
    <property type="chains" value="Y=1-58"/>
</dbReference>
<dbReference type="PDB" id="7UVZ">
    <property type="method" value="EM"/>
    <property type="resolution" value="2.21 A"/>
    <property type="chains" value="Y=1-58"/>
</dbReference>
<dbReference type="PDB" id="7UW1">
    <property type="method" value="EM"/>
    <property type="resolution" value="2.21 A"/>
    <property type="chains" value="Y=1-58"/>
</dbReference>
<dbReference type="PDBsum" id="7M4V"/>
<dbReference type="PDBsum" id="7UVV"/>
<dbReference type="PDBsum" id="7UVW"/>
<dbReference type="PDBsum" id="7UVX"/>
<dbReference type="PDBsum" id="7UVY"/>
<dbReference type="PDBsum" id="7UVZ"/>
<dbReference type="PDBsum" id="7UW1"/>
<dbReference type="EMDB" id="EMD-26817"/>
<dbReference type="EMDB" id="EMD-26818"/>
<dbReference type="EMDB" id="EMD-26819"/>
<dbReference type="EMDB" id="EMD-26820"/>
<dbReference type="EMDB" id="EMD-26821"/>
<dbReference type="EMDB" id="EMD-26822"/>
<dbReference type="SMR" id="B7IA21"/>
<dbReference type="IntAct" id="B7IA21">
    <property type="interactions" value="2"/>
</dbReference>
<dbReference type="GeneID" id="9380834"/>
<dbReference type="KEGG" id="abn:AB57_3512"/>
<dbReference type="HOGENOM" id="CLU_131047_1_4_6"/>
<dbReference type="Proteomes" id="UP000007094">
    <property type="component" value="Chromosome"/>
</dbReference>
<dbReference type="GO" id="GO:0022625">
    <property type="term" value="C:cytosolic large ribosomal subunit"/>
    <property type="evidence" value="ECO:0007669"/>
    <property type="project" value="TreeGrafter"/>
</dbReference>
<dbReference type="GO" id="GO:0003735">
    <property type="term" value="F:structural constituent of ribosome"/>
    <property type="evidence" value="ECO:0007669"/>
    <property type="project" value="InterPro"/>
</dbReference>
<dbReference type="GO" id="GO:0006412">
    <property type="term" value="P:translation"/>
    <property type="evidence" value="ECO:0007669"/>
    <property type="project" value="UniProtKB-UniRule"/>
</dbReference>
<dbReference type="CDD" id="cd01658">
    <property type="entry name" value="Ribosomal_L30"/>
    <property type="match status" value="1"/>
</dbReference>
<dbReference type="FunFam" id="3.30.1390.20:FF:000001">
    <property type="entry name" value="50S ribosomal protein L30"/>
    <property type="match status" value="1"/>
</dbReference>
<dbReference type="Gene3D" id="3.30.1390.20">
    <property type="entry name" value="Ribosomal protein L30, ferredoxin-like fold domain"/>
    <property type="match status" value="1"/>
</dbReference>
<dbReference type="HAMAP" id="MF_01371_B">
    <property type="entry name" value="Ribosomal_uL30_B"/>
    <property type="match status" value="1"/>
</dbReference>
<dbReference type="InterPro" id="IPR036919">
    <property type="entry name" value="Ribo_uL30_ferredoxin-like_sf"/>
</dbReference>
<dbReference type="InterPro" id="IPR005996">
    <property type="entry name" value="Ribosomal_uL30_bac-type"/>
</dbReference>
<dbReference type="InterPro" id="IPR016082">
    <property type="entry name" value="Ribosomal_uL30_ferredoxin-like"/>
</dbReference>
<dbReference type="NCBIfam" id="TIGR01308">
    <property type="entry name" value="rpmD_bact"/>
    <property type="match status" value="1"/>
</dbReference>
<dbReference type="PANTHER" id="PTHR15892:SF2">
    <property type="entry name" value="LARGE RIBOSOMAL SUBUNIT PROTEIN UL30M"/>
    <property type="match status" value="1"/>
</dbReference>
<dbReference type="PANTHER" id="PTHR15892">
    <property type="entry name" value="MITOCHONDRIAL RIBOSOMAL PROTEIN L30"/>
    <property type="match status" value="1"/>
</dbReference>
<dbReference type="Pfam" id="PF00327">
    <property type="entry name" value="Ribosomal_L30"/>
    <property type="match status" value="1"/>
</dbReference>
<dbReference type="PIRSF" id="PIRSF002211">
    <property type="entry name" value="Ribosomal_L30_bac-type"/>
    <property type="match status" value="1"/>
</dbReference>
<dbReference type="SUPFAM" id="SSF55129">
    <property type="entry name" value="Ribosomal protein L30p/L7e"/>
    <property type="match status" value="1"/>
</dbReference>
<gene>
    <name evidence="1" type="primary">rpmD</name>
    <name type="ordered locus">AB57_3512</name>
</gene>
<sequence length="58" mass="6642">MKTIKVTQTKSSSHRLKNHKLCLQGLGLRRIGHTVEVQDTPSNRGMINKVYYMVSVEE</sequence>
<feature type="chain" id="PRO_1000144636" description="Large ribosomal subunit protein uL30">
    <location>
        <begin position="1"/>
        <end position="58"/>
    </location>
</feature>
<feature type="strand" evidence="3">
    <location>
        <begin position="3"/>
        <end position="8"/>
    </location>
</feature>
<feature type="helix" evidence="3">
    <location>
        <begin position="17"/>
        <end position="25"/>
    </location>
</feature>
<feature type="strand" evidence="3">
    <location>
        <begin position="34"/>
        <end position="38"/>
    </location>
</feature>
<feature type="helix" evidence="3">
    <location>
        <begin position="41"/>
        <end position="49"/>
    </location>
</feature>
<feature type="helix" evidence="3">
    <location>
        <begin position="50"/>
        <end position="53"/>
    </location>
</feature>
<feature type="strand" evidence="3">
    <location>
        <begin position="54"/>
        <end position="57"/>
    </location>
</feature>
<evidence type="ECO:0000255" key="1">
    <source>
        <dbReference type="HAMAP-Rule" id="MF_01371"/>
    </source>
</evidence>
<evidence type="ECO:0000305" key="2"/>
<evidence type="ECO:0007829" key="3">
    <source>
        <dbReference type="PDB" id="7M4V"/>
    </source>
</evidence>